<accession>B8E7M2</accession>
<protein>
    <recommendedName>
        <fullName evidence="1">Homoserine O-succinyltransferase</fullName>
        <shortName evidence="1">HST</shortName>
        <ecNumber evidence="1">2.3.1.46</ecNumber>
    </recommendedName>
    <alternativeName>
        <fullName evidence="1">Homoserine transsuccinylase</fullName>
        <shortName evidence="1">HTS</shortName>
    </alternativeName>
</protein>
<sequence>MPVRIPDHLPAAEVLESENIFVMSETRAANQDIRPMKVLILNLMPNKIETETQLLRLLGNTPLQVDVDLLRIHDKESKHTSIDHMNTFYRDFEAVRHKNYDGLIITGAPLGQIDFEDVVYWDHIREIIDWSQEHVTSVLFLCWAAHAGLYHLYGLNRKILQQKRSGVFVHRRTSQHFPLLRGFDDEFFAPHSRFAEMDVEEIRQHPQLQLLAESDEAGAYLVLSRNNRNLFVMGHPEYQKSTLNEEYQRDLSQGLDPNVPQNYYRNDDPKADAIARWHSHGSLLVSNWLNYYVYQLTPYDLSDMTAMTPWESR</sequence>
<name>METAS_SHEB2</name>
<keyword id="KW-0012">Acyltransferase</keyword>
<keyword id="KW-0028">Amino-acid biosynthesis</keyword>
<keyword id="KW-0963">Cytoplasm</keyword>
<keyword id="KW-0486">Methionine biosynthesis</keyword>
<keyword id="KW-0808">Transferase</keyword>
<proteinExistence type="inferred from homology"/>
<feature type="chain" id="PRO_1000191190" description="Homoserine O-succinyltransferase">
    <location>
        <begin position="1"/>
        <end position="313"/>
    </location>
</feature>
<feature type="active site" description="Acyl-thioester intermediate" evidence="1">
    <location>
        <position position="142"/>
    </location>
</feature>
<feature type="active site" description="Proton acceptor" evidence="1">
    <location>
        <position position="235"/>
    </location>
</feature>
<feature type="active site" evidence="1">
    <location>
        <position position="237"/>
    </location>
</feature>
<feature type="binding site" evidence="1">
    <location>
        <position position="163"/>
    </location>
    <ligand>
        <name>substrate</name>
    </ligand>
</feature>
<feature type="binding site" evidence="1">
    <location>
        <position position="192"/>
    </location>
    <ligand>
        <name>substrate</name>
    </ligand>
</feature>
<feature type="binding site" evidence="1">
    <location>
        <position position="249"/>
    </location>
    <ligand>
        <name>substrate</name>
    </ligand>
</feature>
<feature type="site" description="Important for acyl-CoA specificity" evidence="1">
    <location>
        <position position="111"/>
    </location>
</feature>
<feature type="site" description="Important for substrate specificity" evidence="1">
    <location>
        <position position="192"/>
    </location>
</feature>
<gene>
    <name evidence="1" type="primary">metAS</name>
    <name type="ordered locus">Sbal223_2858</name>
</gene>
<organism>
    <name type="scientific">Shewanella baltica (strain OS223)</name>
    <dbReference type="NCBI Taxonomy" id="407976"/>
    <lineage>
        <taxon>Bacteria</taxon>
        <taxon>Pseudomonadati</taxon>
        <taxon>Pseudomonadota</taxon>
        <taxon>Gammaproteobacteria</taxon>
        <taxon>Alteromonadales</taxon>
        <taxon>Shewanellaceae</taxon>
        <taxon>Shewanella</taxon>
    </lineage>
</organism>
<dbReference type="EC" id="2.3.1.46" evidence="1"/>
<dbReference type="EMBL" id="CP001252">
    <property type="protein sequence ID" value="ACK47344.1"/>
    <property type="molecule type" value="Genomic_DNA"/>
</dbReference>
<dbReference type="SMR" id="B8E7M2"/>
<dbReference type="KEGG" id="sbp:Sbal223_2858"/>
<dbReference type="HOGENOM" id="CLU_057851_0_1_6"/>
<dbReference type="UniPathway" id="UPA00051">
    <property type="reaction ID" value="UER00075"/>
</dbReference>
<dbReference type="Proteomes" id="UP000002507">
    <property type="component" value="Chromosome"/>
</dbReference>
<dbReference type="GO" id="GO:0005737">
    <property type="term" value="C:cytoplasm"/>
    <property type="evidence" value="ECO:0007669"/>
    <property type="project" value="UniProtKB-SubCell"/>
</dbReference>
<dbReference type="GO" id="GO:0004414">
    <property type="term" value="F:homoserine O-acetyltransferase activity"/>
    <property type="evidence" value="ECO:0007669"/>
    <property type="project" value="UniProtKB-UniRule"/>
</dbReference>
<dbReference type="GO" id="GO:0008899">
    <property type="term" value="F:homoserine O-succinyltransferase activity"/>
    <property type="evidence" value="ECO:0007669"/>
    <property type="project" value="UniProtKB-EC"/>
</dbReference>
<dbReference type="GO" id="GO:0019281">
    <property type="term" value="P:L-methionine biosynthetic process from homoserine via O-succinyl-L-homoserine and cystathionine"/>
    <property type="evidence" value="ECO:0007669"/>
    <property type="project" value="InterPro"/>
</dbReference>
<dbReference type="CDD" id="cd03131">
    <property type="entry name" value="GATase1_HTS"/>
    <property type="match status" value="1"/>
</dbReference>
<dbReference type="FunFam" id="3.40.50.880:FF:000004">
    <property type="entry name" value="Homoserine O-succinyltransferase"/>
    <property type="match status" value="1"/>
</dbReference>
<dbReference type="Gene3D" id="3.40.50.880">
    <property type="match status" value="1"/>
</dbReference>
<dbReference type="HAMAP" id="MF_00295">
    <property type="entry name" value="MetA_acyltransf"/>
    <property type="match status" value="1"/>
</dbReference>
<dbReference type="InterPro" id="IPR029062">
    <property type="entry name" value="Class_I_gatase-like"/>
</dbReference>
<dbReference type="InterPro" id="IPR005697">
    <property type="entry name" value="HST_MetA"/>
</dbReference>
<dbReference type="InterPro" id="IPR033752">
    <property type="entry name" value="MetA_family"/>
</dbReference>
<dbReference type="NCBIfam" id="TIGR01001">
    <property type="entry name" value="metA"/>
    <property type="match status" value="1"/>
</dbReference>
<dbReference type="PANTHER" id="PTHR20919">
    <property type="entry name" value="HOMOSERINE O-SUCCINYLTRANSFERASE"/>
    <property type="match status" value="1"/>
</dbReference>
<dbReference type="PANTHER" id="PTHR20919:SF0">
    <property type="entry name" value="HOMOSERINE O-SUCCINYLTRANSFERASE"/>
    <property type="match status" value="1"/>
</dbReference>
<dbReference type="Pfam" id="PF04204">
    <property type="entry name" value="HTS"/>
    <property type="match status" value="1"/>
</dbReference>
<dbReference type="PIRSF" id="PIRSF000450">
    <property type="entry name" value="H_ser_succinyltr"/>
    <property type="match status" value="1"/>
</dbReference>
<dbReference type="SUPFAM" id="SSF52317">
    <property type="entry name" value="Class I glutamine amidotransferase-like"/>
    <property type="match status" value="1"/>
</dbReference>
<reference key="1">
    <citation type="submission" date="2008-12" db="EMBL/GenBank/DDBJ databases">
        <title>Complete sequence of chromosome of Shewanella baltica OS223.</title>
        <authorList>
            <consortium name="US DOE Joint Genome Institute"/>
            <person name="Lucas S."/>
            <person name="Copeland A."/>
            <person name="Lapidus A."/>
            <person name="Glavina del Rio T."/>
            <person name="Dalin E."/>
            <person name="Tice H."/>
            <person name="Bruce D."/>
            <person name="Goodwin L."/>
            <person name="Pitluck S."/>
            <person name="Chertkov O."/>
            <person name="Meincke L."/>
            <person name="Brettin T."/>
            <person name="Detter J.C."/>
            <person name="Han C."/>
            <person name="Kuske C.R."/>
            <person name="Larimer F."/>
            <person name="Land M."/>
            <person name="Hauser L."/>
            <person name="Kyrpides N."/>
            <person name="Ovchinnikova G."/>
            <person name="Brettar I."/>
            <person name="Rodrigues J."/>
            <person name="Konstantinidis K."/>
            <person name="Tiedje J."/>
        </authorList>
    </citation>
    <scope>NUCLEOTIDE SEQUENCE [LARGE SCALE GENOMIC DNA]</scope>
    <source>
        <strain>OS223</strain>
    </source>
</reference>
<evidence type="ECO:0000255" key="1">
    <source>
        <dbReference type="HAMAP-Rule" id="MF_00295"/>
    </source>
</evidence>
<comment type="function">
    <text evidence="1">Transfers a succinyl group from succinyl-CoA to L-homoserine, forming succinyl-L-homoserine.</text>
</comment>
<comment type="catalytic activity">
    <reaction evidence="1">
        <text>L-homoserine + succinyl-CoA = O-succinyl-L-homoserine + CoA</text>
        <dbReference type="Rhea" id="RHEA:22008"/>
        <dbReference type="ChEBI" id="CHEBI:57287"/>
        <dbReference type="ChEBI" id="CHEBI:57292"/>
        <dbReference type="ChEBI" id="CHEBI:57476"/>
        <dbReference type="ChEBI" id="CHEBI:57661"/>
        <dbReference type="EC" id="2.3.1.46"/>
    </reaction>
</comment>
<comment type="pathway">
    <text evidence="1">Amino-acid biosynthesis; L-methionine biosynthesis via de novo pathway; O-succinyl-L-homoserine from L-homoserine: step 1/1.</text>
</comment>
<comment type="subcellular location">
    <subcellularLocation>
        <location evidence="1">Cytoplasm</location>
    </subcellularLocation>
</comment>
<comment type="similarity">
    <text evidence="1">Belongs to the MetA family.</text>
</comment>